<dbReference type="EC" id="1.17.1.8" evidence="1"/>
<dbReference type="EMBL" id="CP000733">
    <property type="protein sequence ID" value="ABS78507.1"/>
    <property type="molecule type" value="Genomic_DNA"/>
</dbReference>
<dbReference type="RefSeq" id="WP_005770530.1">
    <property type="nucleotide sequence ID" value="NC_009727.1"/>
</dbReference>
<dbReference type="SMR" id="A9KC25"/>
<dbReference type="KEGG" id="cbd:CBUD_0297"/>
<dbReference type="HOGENOM" id="CLU_047479_0_1_6"/>
<dbReference type="UniPathway" id="UPA00034">
    <property type="reaction ID" value="UER00018"/>
</dbReference>
<dbReference type="Proteomes" id="UP000008555">
    <property type="component" value="Chromosome"/>
</dbReference>
<dbReference type="GO" id="GO:0005829">
    <property type="term" value="C:cytosol"/>
    <property type="evidence" value="ECO:0007669"/>
    <property type="project" value="TreeGrafter"/>
</dbReference>
<dbReference type="GO" id="GO:0008839">
    <property type="term" value="F:4-hydroxy-tetrahydrodipicolinate reductase"/>
    <property type="evidence" value="ECO:0007669"/>
    <property type="project" value="UniProtKB-EC"/>
</dbReference>
<dbReference type="GO" id="GO:0051287">
    <property type="term" value="F:NAD binding"/>
    <property type="evidence" value="ECO:0007669"/>
    <property type="project" value="UniProtKB-UniRule"/>
</dbReference>
<dbReference type="GO" id="GO:0050661">
    <property type="term" value="F:NADP binding"/>
    <property type="evidence" value="ECO:0007669"/>
    <property type="project" value="UniProtKB-UniRule"/>
</dbReference>
<dbReference type="GO" id="GO:0016726">
    <property type="term" value="F:oxidoreductase activity, acting on CH or CH2 groups, NAD or NADP as acceptor"/>
    <property type="evidence" value="ECO:0007669"/>
    <property type="project" value="UniProtKB-UniRule"/>
</dbReference>
<dbReference type="GO" id="GO:0019877">
    <property type="term" value="P:diaminopimelate biosynthetic process"/>
    <property type="evidence" value="ECO:0007669"/>
    <property type="project" value="UniProtKB-UniRule"/>
</dbReference>
<dbReference type="GO" id="GO:0009089">
    <property type="term" value="P:lysine biosynthetic process via diaminopimelate"/>
    <property type="evidence" value="ECO:0007669"/>
    <property type="project" value="UniProtKB-UniRule"/>
</dbReference>
<dbReference type="CDD" id="cd02274">
    <property type="entry name" value="DHDPR_N"/>
    <property type="match status" value="1"/>
</dbReference>
<dbReference type="FunFam" id="3.30.360.10:FF:000009">
    <property type="entry name" value="4-hydroxy-tetrahydrodipicolinate reductase"/>
    <property type="match status" value="1"/>
</dbReference>
<dbReference type="Gene3D" id="3.30.360.10">
    <property type="entry name" value="Dihydrodipicolinate Reductase, domain 2"/>
    <property type="match status" value="1"/>
</dbReference>
<dbReference type="Gene3D" id="3.40.50.720">
    <property type="entry name" value="NAD(P)-binding Rossmann-like Domain"/>
    <property type="match status" value="1"/>
</dbReference>
<dbReference type="HAMAP" id="MF_00102">
    <property type="entry name" value="DapB"/>
    <property type="match status" value="1"/>
</dbReference>
<dbReference type="InterPro" id="IPR022663">
    <property type="entry name" value="DapB_C"/>
</dbReference>
<dbReference type="InterPro" id="IPR000846">
    <property type="entry name" value="DapB_N"/>
</dbReference>
<dbReference type="InterPro" id="IPR022664">
    <property type="entry name" value="DapB_N_CS"/>
</dbReference>
<dbReference type="InterPro" id="IPR023940">
    <property type="entry name" value="DHDPR_bac"/>
</dbReference>
<dbReference type="InterPro" id="IPR036291">
    <property type="entry name" value="NAD(P)-bd_dom_sf"/>
</dbReference>
<dbReference type="NCBIfam" id="TIGR00036">
    <property type="entry name" value="dapB"/>
    <property type="match status" value="1"/>
</dbReference>
<dbReference type="PANTHER" id="PTHR20836:SF0">
    <property type="entry name" value="4-HYDROXY-TETRAHYDRODIPICOLINATE REDUCTASE 1, CHLOROPLASTIC-RELATED"/>
    <property type="match status" value="1"/>
</dbReference>
<dbReference type="PANTHER" id="PTHR20836">
    <property type="entry name" value="DIHYDRODIPICOLINATE REDUCTASE"/>
    <property type="match status" value="1"/>
</dbReference>
<dbReference type="Pfam" id="PF05173">
    <property type="entry name" value="DapB_C"/>
    <property type="match status" value="1"/>
</dbReference>
<dbReference type="Pfam" id="PF01113">
    <property type="entry name" value="DapB_N"/>
    <property type="match status" value="1"/>
</dbReference>
<dbReference type="PIRSF" id="PIRSF000161">
    <property type="entry name" value="DHPR"/>
    <property type="match status" value="1"/>
</dbReference>
<dbReference type="SUPFAM" id="SSF55347">
    <property type="entry name" value="Glyceraldehyde-3-phosphate dehydrogenase-like, C-terminal domain"/>
    <property type="match status" value="1"/>
</dbReference>
<dbReference type="SUPFAM" id="SSF51735">
    <property type="entry name" value="NAD(P)-binding Rossmann-fold domains"/>
    <property type="match status" value="1"/>
</dbReference>
<dbReference type="PROSITE" id="PS01298">
    <property type="entry name" value="DAPB"/>
    <property type="match status" value="1"/>
</dbReference>
<evidence type="ECO:0000255" key="1">
    <source>
        <dbReference type="HAMAP-Rule" id="MF_00102"/>
    </source>
</evidence>
<evidence type="ECO:0000305" key="2"/>
<accession>A9KC25</accession>
<gene>
    <name evidence="1" type="primary">dapB</name>
    <name type="ordered locus">CBUD_0297</name>
</gene>
<reference key="1">
    <citation type="journal article" date="2009" name="Infect. Immun.">
        <title>Comparative genomics reveal extensive transposon-mediated genomic plasticity and diversity among potential effector proteins within the genus Coxiella.</title>
        <authorList>
            <person name="Beare P.A."/>
            <person name="Unsworth N."/>
            <person name="Andoh M."/>
            <person name="Voth D.E."/>
            <person name="Omsland A."/>
            <person name="Gilk S.D."/>
            <person name="Williams K.P."/>
            <person name="Sobral B.W."/>
            <person name="Kupko J.J. III"/>
            <person name="Porcella S.F."/>
            <person name="Samuel J.E."/>
            <person name="Heinzen R.A."/>
        </authorList>
    </citation>
    <scope>NUCLEOTIDE SEQUENCE [LARGE SCALE GENOMIC DNA]</scope>
    <source>
        <strain>Dugway 5J108-111</strain>
    </source>
</reference>
<name>DAPB_COXBN</name>
<organism>
    <name type="scientific">Coxiella burnetii (strain Dugway 5J108-111)</name>
    <dbReference type="NCBI Taxonomy" id="434922"/>
    <lineage>
        <taxon>Bacteria</taxon>
        <taxon>Pseudomonadati</taxon>
        <taxon>Pseudomonadota</taxon>
        <taxon>Gammaproteobacteria</taxon>
        <taxon>Legionellales</taxon>
        <taxon>Coxiellaceae</taxon>
        <taxon>Coxiella</taxon>
    </lineage>
</organism>
<keyword id="KW-0028">Amino-acid biosynthesis</keyword>
<keyword id="KW-0963">Cytoplasm</keyword>
<keyword id="KW-0220">Diaminopimelate biosynthesis</keyword>
<keyword id="KW-0457">Lysine biosynthesis</keyword>
<keyword id="KW-0520">NAD</keyword>
<keyword id="KW-0521">NADP</keyword>
<keyword id="KW-0560">Oxidoreductase</keyword>
<feature type="chain" id="PRO_1000075673" description="4-hydroxy-tetrahydrodipicolinate reductase">
    <location>
        <begin position="1"/>
        <end position="239"/>
    </location>
</feature>
<feature type="active site" description="Proton donor/acceptor" evidence="1">
    <location>
        <position position="134"/>
    </location>
</feature>
<feature type="active site" description="Proton donor" evidence="1">
    <location>
        <position position="138"/>
    </location>
</feature>
<feature type="binding site" evidence="1">
    <location>
        <begin position="9"/>
        <end position="14"/>
    </location>
    <ligand>
        <name>NAD(+)</name>
        <dbReference type="ChEBI" id="CHEBI:57540"/>
    </ligand>
</feature>
<feature type="binding site" evidence="1">
    <location>
        <begin position="78"/>
        <end position="80"/>
    </location>
    <ligand>
        <name>NAD(+)</name>
        <dbReference type="ChEBI" id="CHEBI:57540"/>
    </ligand>
</feature>
<feature type="binding site" evidence="1">
    <location>
        <begin position="104"/>
        <end position="107"/>
    </location>
    <ligand>
        <name>NAD(+)</name>
        <dbReference type="ChEBI" id="CHEBI:57540"/>
    </ligand>
</feature>
<feature type="binding site" evidence="1">
    <location>
        <position position="135"/>
    </location>
    <ligand>
        <name>(S)-2,3,4,5-tetrahydrodipicolinate</name>
        <dbReference type="ChEBI" id="CHEBI:16845"/>
    </ligand>
</feature>
<feature type="binding site" evidence="1">
    <location>
        <begin position="144"/>
        <end position="145"/>
    </location>
    <ligand>
        <name>(S)-2,3,4,5-tetrahydrodipicolinate</name>
        <dbReference type="ChEBI" id="CHEBI:16845"/>
    </ligand>
</feature>
<sequence>MAINVIINGINGKMGRVVKENITAQSDLELVSGTGRQDDLAKTIQTTHADVVIDFTTPQSVFHNAEIIIQSGARPVIGTTGLTLEQIALLDKQCRNKKLGAIVAPNFSVGAVLMMKYAKEAAHYFPDVEIIEMHHSQKIDAPSGTAIKTAQMIGEMRSSKKDEPFKDRARGEIKNGIPIHSIRLPGLFSHQSVIFGSNGETLTIRHDGMDRNCTMPGIFMACRKVMELDYLVYGLENLL</sequence>
<proteinExistence type="inferred from homology"/>
<comment type="function">
    <text evidence="1">Catalyzes the conversion of 4-hydroxy-tetrahydrodipicolinate (HTPA) to tetrahydrodipicolinate.</text>
</comment>
<comment type="catalytic activity">
    <reaction evidence="1">
        <text>(S)-2,3,4,5-tetrahydrodipicolinate + NAD(+) + H2O = (2S,4S)-4-hydroxy-2,3,4,5-tetrahydrodipicolinate + NADH + H(+)</text>
        <dbReference type="Rhea" id="RHEA:35323"/>
        <dbReference type="ChEBI" id="CHEBI:15377"/>
        <dbReference type="ChEBI" id="CHEBI:15378"/>
        <dbReference type="ChEBI" id="CHEBI:16845"/>
        <dbReference type="ChEBI" id="CHEBI:57540"/>
        <dbReference type="ChEBI" id="CHEBI:57945"/>
        <dbReference type="ChEBI" id="CHEBI:67139"/>
        <dbReference type="EC" id="1.17.1.8"/>
    </reaction>
</comment>
<comment type="catalytic activity">
    <reaction evidence="1">
        <text>(S)-2,3,4,5-tetrahydrodipicolinate + NADP(+) + H2O = (2S,4S)-4-hydroxy-2,3,4,5-tetrahydrodipicolinate + NADPH + H(+)</text>
        <dbReference type="Rhea" id="RHEA:35331"/>
        <dbReference type="ChEBI" id="CHEBI:15377"/>
        <dbReference type="ChEBI" id="CHEBI:15378"/>
        <dbReference type="ChEBI" id="CHEBI:16845"/>
        <dbReference type="ChEBI" id="CHEBI:57783"/>
        <dbReference type="ChEBI" id="CHEBI:58349"/>
        <dbReference type="ChEBI" id="CHEBI:67139"/>
        <dbReference type="EC" id="1.17.1.8"/>
    </reaction>
</comment>
<comment type="pathway">
    <text evidence="1">Amino-acid biosynthesis; L-lysine biosynthesis via DAP pathway; (S)-tetrahydrodipicolinate from L-aspartate: step 4/4.</text>
</comment>
<comment type="subcellular location">
    <subcellularLocation>
        <location evidence="1">Cytoplasm</location>
    </subcellularLocation>
</comment>
<comment type="similarity">
    <text evidence="1">Belongs to the DapB family.</text>
</comment>
<comment type="caution">
    <text evidence="2">Was originally thought to be a dihydrodipicolinate reductase (DHDPR), catalyzing the conversion of dihydrodipicolinate to tetrahydrodipicolinate. However, it was shown in E.coli that the substrate of the enzymatic reaction is not dihydrodipicolinate (DHDP) but in fact (2S,4S)-4-hydroxy-2,3,4,5-tetrahydrodipicolinic acid (HTPA), the product released by the DapA-catalyzed reaction.</text>
</comment>
<protein>
    <recommendedName>
        <fullName evidence="1">4-hydroxy-tetrahydrodipicolinate reductase</fullName>
        <shortName evidence="1">HTPA reductase</shortName>
        <ecNumber evidence="1">1.17.1.8</ecNumber>
    </recommendedName>
</protein>